<reference key="1">
    <citation type="journal article" date="1993" name="J. Bacteriol.">
        <title>The Rhodobacter capsulatus chlorin reductase-encoding locus, bchA, consists of three genes, bchX, bchY, and bchZ.</title>
        <authorList>
            <person name="Burke D.H."/>
            <person name="Alberti M."/>
            <person name="Hearst J.E."/>
        </authorList>
    </citation>
    <scope>NUCLEOTIDE SEQUENCE [GENOMIC DNA]</scope>
    <source>
        <strain>ATCC BAA-309 / NBRC 16581 / SB1003</strain>
    </source>
</reference>
<reference key="2">
    <citation type="journal article" date="2010" name="J. Bacteriol.">
        <title>Complete genome sequence of the photosynthetic purple nonsulfur bacterium Rhodobacter capsulatus SB 1003.</title>
        <authorList>
            <person name="Strnad H."/>
            <person name="Lapidus A."/>
            <person name="Paces J."/>
            <person name="Ulbrich P."/>
            <person name="Vlcek C."/>
            <person name="Paces V."/>
            <person name="Haselkorn R."/>
        </authorList>
    </citation>
    <scope>NUCLEOTIDE SEQUENCE [LARGE SCALE GENOMIC DNA]</scope>
    <source>
        <strain>ATCC BAA-309 / NBRC 16581 / SB1003</strain>
    </source>
</reference>
<sequence length="314" mass="33010">METQVVIMSGPKAISTGIAGLTDPGPGDLVVDIAYSGISTGTEKLFWLGTMPPFPGMGYPLVPGYESFGEVVQAAPDTGFRPGDHVFIPGANCFTGGLRGLFGGASKRLVTAASRVCRLDPAIGPEGALLALAATARHALAGFDNALPDLIVGHGTLGRLLARLTLAAGGKPPMVWETNPARRTGAVGYEVLDPEADPRRDYKAIYDASGAPGLIDQLVGRLGKGGELVLCGFYTVPVSFAFVPAFMKEMRLRIAAEWQPADLSATRALIESGALSLDGLITHRRPAAEAAEAYQTAFEDPDCLKMILDWKDAK</sequence>
<proteinExistence type="predicted"/>
<dbReference type="EC" id="1.-.-.-"/>
<dbReference type="EMBL" id="Z11165">
    <property type="protein sequence ID" value="CAA77547.1"/>
    <property type="molecule type" value="Genomic_DNA"/>
</dbReference>
<dbReference type="EMBL" id="CP001312">
    <property type="protein sequence ID" value="ADE84451.1"/>
    <property type="molecule type" value="Genomic_DNA"/>
</dbReference>
<dbReference type="PIR" id="JQ0121">
    <property type="entry name" value="JQ0121"/>
</dbReference>
<dbReference type="RefSeq" id="WP_013066430.1">
    <property type="nucleotide sequence ID" value="NC_014034.1"/>
</dbReference>
<dbReference type="SMR" id="D5AP79"/>
<dbReference type="STRING" id="272942.RCAP_rcc00686"/>
<dbReference type="GeneID" id="31489632"/>
<dbReference type="KEGG" id="rcp:RCAP_rcc00686"/>
<dbReference type="eggNOG" id="COG1063">
    <property type="taxonomic scope" value="Bacteria"/>
</dbReference>
<dbReference type="HOGENOM" id="CLU_026673_6_0_5"/>
<dbReference type="OrthoDB" id="9806940at2"/>
<dbReference type="BRENDA" id="1.1.1.396">
    <property type="organism ID" value="5381"/>
</dbReference>
<dbReference type="UniPathway" id="UPA00671"/>
<dbReference type="Proteomes" id="UP000002361">
    <property type="component" value="Chromosome"/>
</dbReference>
<dbReference type="GO" id="GO:0036354">
    <property type="term" value="F:bacteriochlorophyllide-a dehydrogenase activity"/>
    <property type="evidence" value="ECO:0007669"/>
    <property type="project" value="InterPro"/>
</dbReference>
<dbReference type="GO" id="GO:0036070">
    <property type="term" value="P:light-independent bacteriochlorophyll biosynthetic process"/>
    <property type="evidence" value="ECO:0007669"/>
    <property type="project" value="UniProtKB-UniPathway"/>
</dbReference>
<dbReference type="GO" id="GO:0015979">
    <property type="term" value="P:photosynthesis"/>
    <property type="evidence" value="ECO:0007669"/>
    <property type="project" value="UniProtKB-KW"/>
</dbReference>
<dbReference type="CDD" id="cd08255">
    <property type="entry name" value="2-desacetyl-2-hydroxyethyl_bacteriochlorophyllide_like"/>
    <property type="match status" value="1"/>
</dbReference>
<dbReference type="Gene3D" id="3.90.180.10">
    <property type="entry name" value="Medium-chain alcohol dehydrogenases, catalytic domain"/>
    <property type="match status" value="2"/>
</dbReference>
<dbReference type="Gene3D" id="3.40.50.720">
    <property type="entry name" value="NAD(P)-binding Rossmann-like Domain"/>
    <property type="match status" value="1"/>
</dbReference>
<dbReference type="InterPro" id="IPR013154">
    <property type="entry name" value="ADH-like_N"/>
</dbReference>
<dbReference type="InterPro" id="IPR005903">
    <property type="entry name" value="BchC"/>
</dbReference>
<dbReference type="InterPro" id="IPR011032">
    <property type="entry name" value="GroES-like_sf"/>
</dbReference>
<dbReference type="InterPro" id="IPR036291">
    <property type="entry name" value="NAD(P)-bd_dom_sf"/>
</dbReference>
<dbReference type="NCBIfam" id="TIGR01202">
    <property type="entry name" value="bchC"/>
    <property type="match status" value="1"/>
</dbReference>
<dbReference type="PANTHER" id="PTHR43189:SF1">
    <property type="entry name" value="ZINC-TYPE ALCOHOL DEHYDROGENASE-LIKE PROTEIN C1198.01"/>
    <property type="match status" value="1"/>
</dbReference>
<dbReference type="PANTHER" id="PTHR43189">
    <property type="entry name" value="ZINC-TYPE ALCOHOL DEHYDROGENASE-LIKE PROTEIN C1198.01-RELATED"/>
    <property type="match status" value="1"/>
</dbReference>
<dbReference type="Pfam" id="PF08240">
    <property type="entry name" value="ADH_N"/>
    <property type="match status" value="1"/>
</dbReference>
<dbReference type="SUPFAM" id="SSF50129">
    <property type="entry name" value="GroES-like"/>
    <property type="match status" value="1"/>
</dbReference>
<dbReference type="SUPFAM" id="SSF51735">
    <property type="entry name" value="NAD(P)-binding Rossmann-fold domains"/>
    <property type="match status" value="1"/>
</dbReference>
<feature type="chain" id="PRO_0000409927" description="2-desacetyl-2-hydroxyethyl bacteriochlorophyllide A dehydrogenase">
    <location>
        <begin position="1"/>
        <end position="314"/>
    </location>
</feature>
<protein>
    <recommendedName>
        <fullName>2-desacetyl-2-hydroxyethyl bacteriochlorophyllide A dehydrogenase</fullName>
        <ecNumber>1.-.-.-</ecNumber>
    </recommendedName>
</protein>
<keyword id="KW-0077">Bacteriochlorophyll biosynthesis</keyword>
<keyword id="KW-0149">Chlorophyll biosynthesis</keyword>
<keyword id="KW-0560">Oxidoreductase</keyword>
<keyword id="KW-0602">Photosynthesis</keyword>
<keyword id="KW-1185">Reference proteome</keyword>
<accession>D5AP79</accession>
<accession>P16565</accession>
<organism>
    <name type="scientific">Rhodobacter capsulatus (strain ATCC BAA-309 / NBRC 16581 / SB1003)</name>
    <dbReference type="NCBI Taxonomy" id="272942"/>
    <lineage>
        <taxon>Bacteria</taxon>
        <taxon>Pseudomonadati</taxon>
        <taxon>Pseudomonadota</taxon>
        <taxon>Alphaproteobacteria</taxon>
        <taxon>Rhodobacterales</taxon>
        <taxon>Rhodobacter group</taxon>
        <taxon>Rhodobacter</taxon>
    </lineage>
</organism>
<name>BCHC_RHOCB</name>
<gene>
    <name type="primary">bchC</name>
    <name type="ordered locus">RCAP_rcc00686</name>
</gene>
<comment type="function">
    <text>This protein catalyzes the penultimate step in bacteriochlorophyll a biosynthesis.</text>
</comment>
<comment type="pathway">
    <text>Porphyrin-containing compound metabolism; bacteriochlorophyll biosynthesis (light-independent).</text>
</comment>